<evidence type="ECO:0000255" key="1">
    <source>
        <dbReference type="HAMAP-Rule" id="MF_00249"/>
    </source>
</evidence>
<name>HSLU_SHESW</name>
<gene>
    <name evidence="1" type="primary">hslU</name>
    <name type="ordered locus">Sputw3181_3643</name>
</gene>
<feature type="chain" id="PRO_1000012809" description="ATP-dependent protease ATPase subunit HslU">
    <location>
        <begin position="1"/>
        <end position="442"/>
    </location>
</feature>
<feature type="binding site" evidence="1">
    <location>
        <position position="18"/>
    </location>
    <ligand>
        <name>ATP</name>
        <dbReference type="ChEBI" id="CHEBI:30616"/>
    </ligand>
</feature>
<feature type="binding site" evidence="1">
    <location>
        <begin position="60"/>
        <end position="65"/>
    </location>
    <ligand>
        <name>ATP</name>
        <dbReference type="ChEBI" id="CHEBI:30616"/>
    </ligand>
</feature>
<feature type="binding site" evidence="1">
    <location>
        <position position="255"/>
    </location>
    <ligand>
        <name>ATP</name>
        <dbReference type="ChEBI" id="CHEBI:30616"/>
    </ligand>
</feature>
<feature type="binding site" evidence="1">
    <location>
        <position position="320"/>
    </location>
    <ligand>
        <name>ATP</name>
        <dbReference type="ChEBI" id="CHEBI:30616"/>
    </ligand>
</feature>
<feature type="binding site" evidence="1">
    <location>
        <position position="392"/>
    </location>
    <ligand>
        <name>ATP</name>
        <dbReference type="ChEBI" id="CHEBI:30616"/>
    </ligand>
</feature>
<protein>
    <recommendedName>
        <fullName evidence="1">ATP-dependent protease ATPase subunit HslU</fullName>
    </recommendedName>
    <alternativeName>
        <fullName evidence="1">Unfoldase HslU</fullName>
    </alternativeName>
</protein>
<proteinExistence type="inferred from homology"/>
<comment type="function">
    <text evidence="1">ATPase subunit of a proteasome-like degradation complex; this subunit has chaperone activity. The binding of ATP and its subsequent hydrolysis by HslU are essential for unfolding of protein substrates subsequently hydrolyzed by HslV. HslU recognizes the N-terminal part of its protein substrates and unfolds these before they are guided to HslV for hydrolysis.</text>
</comment>
<comment type="subunit">
    <text evidence="1">A double ring-shaped homohexamer of HslV is capped on each side by a ring-shaped HslU homohexamer. The assembly of the HslU/HslV complex is dependent on binding of ATP.</text>
</comment>
<comment type="subcellular location">
    <subcellularLocation>
        <location evidence="1">Cytoplasm</location>
    </subcellularLocation>
</comment>
<comment type="similarity">
    <text evidence="1">Belongs to the ClpX chaperone family. HslU subfamily.</text>
</comment>
<reference key="1">
    <citation type="submission" date="2006-12" db="EMBL/GenBank/DDBJ databases">
        <title>Complete sequence of Shewanella sp. W3-18-1.</title>
        <authorList>
            <consortium name="US DOE Joint Genome Institute"/>
            <person name="Copeland A."/>
            <person name="Lucas S."/>
            <person name="Lapidus A."/>
            <person name="Barry K."/>
            <person name="Detter J.C."/>
            <person name="Glavina del Rio T."/>
            <person name="Hammon N."/>
            <person name="Israni S."/>
            <person name="Dalin E."/>
            <person name="Tice H."/>
            <person name="Pitluck S."/>
            <person name="Chain P."/>
            <person name="Malfatti S."/>
            <person name="Shin M."/>
            <person name="Vergez L."/>
            <person name="Schmutz J."/>
            <person name="Larimer F."/>
            <person name="Land M."/>
            <person name="Hauser L."/>
            <person name="Kyrpides N."/>
            <person name="Lykidis A."/>
            <person name="Tiedje J."/>
            <person name="Richardson P."/>
        </authorList>
    </citation>
    <scope>NUCLEOTIDE SEQUENCE [LARGE SCALE GENOMIC DNA]</scope>
    <source>
        <strain>W3-18-1</strain>
    </source>
</reference>
<sequence length="442" mass="49868">MSEMTPREIVHELDAHIIGQKKAKRSVAVALRNRWRRMQLDADFRQEVTPKNILMIGPTGVGKTEIARRLAKLANAPFIKVEATKFTEVGYVGKEVEQIIRDLTDIAIKLTREQQMGKCRQLAEEHAEERILDALLPKPKNDWESTDTDTGSNTRQIFRKKLREGQLDDKEIDIDVAQPQIGIEIMSPPGMEEMTNQLQSLFKNMGQAPAKRRKMKIKEAFKLLIEEEAAKLVNQEDLKEQAIEMVEQHGIVFLDEIDKICKRGETSGPDVSREGVQRDLLPLVEGCTVTTKHGMVKTDHILFIASGAFQMAKPSDLIPELQGRLPIRVELDALSADDFKRILTEPHASLTEQYVALMGTEGVKVEFTESGIESIAKAAWQVNERTENIGARRLHTVMEKLMEDISYEASDKSGSAFVIDADYVSAHLDNLVQDEDLSRFIL</sequence>
<dbReference type="EMBL" id="CP000503">
    <property type="protein sequence ID" value="ABM26452.1"/>
    <property type="molecule type" value="Genomic_DNA"/>
</dbReference>
<dbReference type="RefSeq" id="WP_011790883.1">
    <property type="nucleotide sequence ID" value="NC_008750.1"/>
</dbReference>
<dbReference type="SMR" id="A1RP57"/>
<dbReference type="KEGG" id="shw:Sputw3181_3643"/>
<dbReference type="HOGENOM" id="CLU_033123_0_0_6"/>
<dbReference type="Proteomes" id="UP000002597">
    <property type="component" value="Chromosome"/>
</dbReference>
<dbReference type="GO" id="GO:0009376">
    <property type="term" value="C:HslUV protease complex"/>
    <property type="evidence" value="ECO:0007669"/>
    <property type="project" value="UniProtKB-UniRule"/>
</dbReference>
<dbReference type="GO" id="GO:0005524">
    <property type="term" value="F:ATP binding"/>
    <property type="evidence" value="ECO:0007669"/>
    <property type="project" value="UniProtKB-UniRule"/>
</dbReference>
<dbReference type="GO" id="GO:0016887">
    <property type="term" value="F:ATP hydrolysis activity"/>
    <property type="evidence" value="ECO:0007669"/>
    <property type="project" value="InterPro"/>
</dbReference>
<dbReference type="GO" id="GO:0008233">
    <property type="term" value="F:peptidase activity"/>
    <property type="evidence" value="ECO:0007669"/>
    <property type="project" value="InterPro"/>
</dbReference>
<dbReference type="GO" id="GO:0036402">
    <property type="term" value="F:proteasome-activating activity"/>
    <property type="evidence" value="ECO:0007669"/>
    <property type="project" value="UniProtKB-UniRule"/>
</dbReference>
<dbReference type="GO" id="GO:0043335">
    <property type="term" value="P:protein unfolding"/>
    <property type="evidence" value="ECO:0007669"/>
    <property type="project" value="UniProtKB-UniRule"/>
</dbReference>
<dbReference type="GO" id="GO:0051603">
    <property type="term" value="P:proteolysis involved in protein catabolic process"/>
    <property type="evidence" value="ECO:0007669"/>
    <property type="project" value="TreeGrafter"/>
</dbReference>
<dbReference type="CDD" id="cd19498">
    <property type="entry name" value="RecA-like_HslU"/>
    <property type="match status" value="1"/>
</dbReference>
<dbReference type="FunFam" id="1.10.8.10:FF:000028">
    <property type="entry name" value="ATP-dependent protease ATPase subunit HslU"/>
    <property type="match status" value="1"/>
</dbReference>
<dbReference type="FunFam" id="1.10.8.60:FF:000027">
    <property type="entry name" value="ATP-dependent protease ATPase subunit HslU"/>
    <property type="match status" value="1"/>
</dbReference>
<dbReference type="FunFam" id="3.40.50.300:FF:000213">
    <property type="entry name" value="ATP-dependent protease ATPase subunit HslU"/>
    <property type="match status" value="1"/>
</dbReference>
<dbReference type="FunFam" id="3.40.50.300:FF:000220">
    <property type="entry name" value="ATP-dependent protease ATPase subunit HslU"/>
    <property type="match status" value="1"/>
</dbReference>
<dbReference type="Gene3D" id="1.10.8.60">
    <property type="match status" value="1"/>
</dbReference>
<dbReference type="Gene3D" id="1.10.8.10">
    <property type="entry name" value="DNA helicase RuvA subunit, C-terminal domain"/>
    <property type="match status" value="1"/>
</dbReference>
<dbReference type="Gene3D" id="3.40.50.300">
    <property type="entry name" value="P-loop containing nucleotide triphosphate hydrolases"/>
    <property type="match status" value="2"/>
</dbReference>
<dbReference type="HAMAP" id="MF_00249">
    <property type="entry name" value="HslU"/>
    <property type="match status" value="1"/>
</dbReference>
<dbReference type="InterPro" id="IPR003593">
    <property type="entry name" value="AAA+_ATPase"/>
</dbReference>
<dbReference type="InterPro" id="IPR050052">
    <property type="entry name" value="ATP-dep_Clp_protease_ClpX"/>
</dbReference>
<dbReference type="InterPro" id="IPR003959">
    <property type="entry name" value="ATPase_AAA_core"/>
</dbReference>
<dbReference type="InterPro" id="IPR019489">
    <property type="entry name" value="Clp_ATPase_C"/>
</dbReference>
<dbReference type="InterPro" id="IPR004491">
    <property type="entry name" value="HslU"/>
</dbReference>
<dbReference type="InterPro" id="IPR027417">
    <property type="entry name" value="P-loop_NTPase"/>
</dbReference>
<dbReference type="NCBIfam" id="TIGR00390">
    <property type="entry name" value="hslU"/>
    <property type="match status" value="1"/>
</dbReference>
<dbReference type="NCBIfam" id="NF003544">
    <property type="entry name" value="PRK05201.1"/>
    <property type="match status" value="1"/>
</dbReference>
<dbReference type="PANTHER" id="PTHR48102">
    <property type="entry name" value="ATP-DEPENDENT CLP PROTEASE ATP-BINDING SUBUNIT CLPX-LIKE, MITOCHONDRIAL-RELATED"/>
    <property type="match status" value="1"/>
</dbReference>
<dbReference type="PANTHER" id="PTHR48102:SF3">
    <property type="entry name" value="ATP-DEPENDENT PROTEASE ATPASE SUBUNIT HSLU"/>
    <property type="match status" value="1"/>
</dbReference>
<dbReference type="Pfam" id="PF00004">
    <property type="entry name" value="AAA"/>
    <property type="match status" value="1"/>
</dbReference>
<dbReference type="Pfam" id="PF07724">
    <property type="entry name" value="AAA_2"/>
    <property type="match status" value="1"/>
</dbReference>
<dbReference type="SMART" id="SM00382">
    <property type="entry name" value="AAA"/>
    <property type="match status" value="1"/>
</dbReference>
<dbReference type="SMART" id="SM01086">
    <property type="entry name" value="ClpB_D2-small"/>
    <property type="match status" value="1"/>
</dbReference>
<dbReference type="SUPFAM" id="SSF52540">
    <property type="entry name" value="P-loop containing nucleoside triphosphate hydrolases"/>
    <property type="match status" value="1"/>
</dbReference>
<accession>A1RP57</accession>
<organism>
    <name type="scientific">Shewanella sp. (strain W3-18-1)</name>
    <dbReference type="NCBI Taxonomy" id="351745"/>
    <lineage>
        <taxon>Bacteria</taxon>
        <taxon>Pseudomonadati</taxon>
        <taxon>Pseudomonadota</taxon>
        <taxon>Gammaproteobacteria</taxon>
        <taxon>Alteromonadales</taxon>
        <taxon>Shewanellaceae</taxon>
        <taxon>Shewanella</taxon>
    </lineage>
</organism>
<keyword id="KW-0067">ATP-binding</keyword>
<keyword id="KW-0143">Chaperone</keyword>
<keyword id="KW-0963">Cytoplasm</keyword>
<keyword id="KW-0547">Nucleotide-binding</keyword>
<keyword id="KW-0346">Stress response</keyword>